<reference key="1">
    <citation type="journal article" date="1990" name="J. Bacteriol.">
        <title>Cloning and sequencing of a bile acid-inducible operon from Eubacterium sp. strain VPI 12708.</title>
        <authorList>
            <person name="Mallonee D.H."/>
            <person name="White W.B."/>
            <person name="Hylemon P.B."/>
        </authorList>
    </citation>
    <scope>NUCLEOTIDE SEQUENCE [GENOMIC DNA]</scope>
    <scope>INDUCTION</scope>
    <source>
        <strain>JCM 10418 / VPI 12708</strain>
    </source>
</reference>
<reference key="2">
    <citation type="journal article" date="1988" name="J. Bacteriol.">
        <title>Evidence for a multigene family involved in bile acid 7-dehydroxylation in Eubacterium sp. strain VPI 12708.</title>
        <authorList>
            <person name="White W.B."/>
            <person name="Franklund C.V."/>
            <person name="Coleman J.P."/>
            <person name="Hylemon P.B."/>
        </authorList>
    </citation>
    <scope>NUCLEOTIDE SEQUENCE [GENOMIC DNA] OF 1-21</scope>
</reference>
<reference key="3">
    <citation type="journal article" date="1988" name="J. Bacteriol.">
        <title>Molecular cloning of a gene encoding a 45,000-dalton polypeptide associated with bile acid 7-dehydroxylation in Eubacterium sp. strain VPI 12708.</title>
        <authorList>
            <person name="White W.B."/>
            <person name="Coleman J.P."/>
            <person name="Hylemon P.B."/>
        </authorList>
    </citation>
    <scope>NUCLEOTIDE SEQUENCE [GENOMIC DNA] OF 1-35</scope>
    <scope>PROTEIN SEQUENCE OF 2-29</scope>
</reference>
<reference key="4">
    <citation type="journal article" date="1999" name="J. Lipid Res.">
        <title>The bile acid-inducible baiF gene from Eubacterium sp. strain VPI 12708 encodes a bile acid-coenzyme A hydrolase.</title>
        <authorList>
            <person name="Ye H.Q."/>
            <person name="Mallonee D.H."/>
            <person name="Wells J.E."/>
            <person name="Bjorkhem I."/>
            <person name="Hylemon P.B."/>
        </authorList>
    </citation>
    <scope>FUNCTION</scope>
    <scope>CATALYTIC ACTIVITY</scope>
    <scope>BIOPHYSICOCHEMICAL PROPERTIES</scope>
    <source>
        <strain>JCM 10418 / VPI 12708</strain>
    </source>
</reference>
<reference key="5">
    <citation type="journal article" date="2012" name="J. Lipid Res.">
        <title>Identification and characterization of two bile acid coenzyme A transferases from Clostridium scindens, a bile acid 7alpha-dehydroxylating intestinal bacterium.</title>
        <authorList>
            <person name="Ridlon J.M."/>
            <person name="Hylemon P.B."/>
        </authorList>
    </citation>
    <scope>FUNCTION</scope>
    <scope>CATALYTIC ACTIVITY</scope>
    <scope>SUBSTRATE SPECIFICITY</scope>
    <scope>PATHWAY</scope>
    <source>
        <strain>JCM 10418 / VPI 12708</strain>
    </source>
</reference>
<feature type="initiator methionine" description="Removed" evidence="3">
    <location>
        <position position="1"/>
    </location>
</feature>
<feature type="chain" id="PRO_0000194715" description="Bile acid CoA-transferase BaiF">
    <location>
        <begin position="2"/>
        <end position="426"/>
    </location>
</feature>
<feature type="active site" description="Nucleophile" evidence="1">
    <location>
        <position position="168"/>
    </location>
</feature>
<feature type="sequence conflict" description="In Ref. 3; AA sequence." evidence="7" ref="3">
    <original>LL</original>
    <variation>FW</variation>
    <location>
        <begin position="33"/>
        <end position="34"/>
    </location>
</feature>
<accession>P19413</accession>
<protein>
    <recommendedName>
        <fullName evidence="8">Bile acid CoA-transferase BaiF</fullName>
        <ecNumber evidence="2">2.8.3.25</ecNumber>
    </recommendedName>
    <alternativeName>
        <fullName evidence="5">Bile acid coenzyme A transferase</fullName>
    </alternativeName>
    <alternativeName>
        <fullName>Bile acid-inducible operon protein F</fullName>
    </alternativeName>
    <alternativeName>
        <fullName evidence="8">Lithocholoyl-CoA:cholate CoA-transferase</fullName>
    </alternativeName>
</protein>
<dbReference type="EC" id="2.8.3.25" evidence="2"/>
<dbReference type="EMBL" id="M22623">
    <property type="status" value="NOT_ANNOTATED_CDS"/>
    <property type="molecule type" value="Genomic_DNA"/>
</dbReference>
<dbReference type="EMBL" id="U57489">
    <property type="protein sequence ID" value="AAC45415.1"/>
    <property type="molecule type" value="Genomic_DNA"/>
</dbReference>
<dbReference type="RefSeq" id="WP_025645819.1">
    <property type="nucleotide sequence ID" value="NZ_CANSEQ010000038.1"/>
</dbReference>
<dbReference type="SMR" id="P19413"/>
<dbReference type="SwissLipids" id="SLP:000001348"/>
<dbReference type="KEGG" id="ag:AAC45415"/>
<dbReference type="BioCyc" id="MetaCyc:BAIFEUBSP-MONOMER"/>
<dbReference type="BRENDA" id="2.8.3.25">
    <property type="organism ID" value="1513"/>
</dbReference>
<dbReference type="SABIO-RK" id="P19413"/>
<dbReference type="UniPathway" id="UPA00221"/>
<dbReference type="GO" id="GO:0005737">
    <property type="term" value="C:cytoplasm"/>
    <property type="evidence" value="ECO:0000305"/>
    <property type="project" value="UniProt"/>
</dbReference>
<dbReference type="GO" id="GO:0033881">
    <property type="term" value="F:bile-acid-CoA transferase activity"/>
    <property type="evidence" value="ECO:0007669"/>
    <property type="project" value="UniProtKB-EC"/>
</dbReference>
<dbReference type="GO" id="GO:0033882">
    <property type="term" value="F:choloyl-CoA hydrolase activity"/>
    <property type="evidence" value="ECO:0000314"/>
    <property type="project" value="UniProt"/>
</dbReference>
<dbReference type="GO" id="GO:0006699">
    <property type="term" value="P:bile acid biosynthetic process"/>
    <property type="evidence" value="ECO:0007669"/>
    <property type="project" value="UniProtKB-UniPathway"/>
</dbReference>
<dbReference type="GO" id="GO:0030573">
    <property type="term" value="P:bile acid catabolic process"/>
    <property type="evidence" value="ECO:0000314"/>
    <property type="project" value="UniProt"/>
</dbReference>
<dbReference type="GO" id="GO:0016042">
    <property type="term" value="P:lipid catabolic process"/>
    <property type="evidence" value="ECO:0007669"/>
    <property type="project" value="UniProtKB-KW"/>
</dbReference>
<dbReference type="Gene3D" id="3.40.50.10540">
    <property type="entry name" value="Crotonobetainyl-coa:carnitine coa-transferase, domain 1"/>
    <property type="match status" value="1"/>
</dbReference>
<dbReference type="Gene3D" id="3.30.1540.10">
    <property type="entry name" value="formyl-coa transferase, domain 3"/>
    <property type="match status" value="1"/>
</dbReference>
<dbReference type="InterPro" id="IPR050509">
    <property type="entry name" value="CoA-transferase_III"/>
</dbReference>
<dbReference type="InterPro" id="IPR003673">
    <property type="entry name" value="CoA-Trfase_fam_III"/>
</dbReference>
<dbReference type="InterPro" id="IPR044855">
    <property type="entry name" value="CoA-Trfase_III_dom3_sf"/>
</dbReference>
<dbReference type="InterPro" id="IPR023606">
    <property type="entry name" value="CoA-Trfase_III_dom_1_sf"/>
</dbReference>
<dbReference type="PANTHER" id="PTHR48228:SF6">
    <property type="entry name" value="L-CARNITINE COA-TRANSFERASE"/>
    <property type="match status" value="1"/>
</dbReference>
<dbReference type="PANTHER" id="PTHR48228">
    <property type="entry name" value="SUCCINYL-COA--D-CITRAMALATE COA-TRANSFERASE"/>
    <property type="match status" value="1"/>
</dbReference>
<dbReference type="Pfam" id="PF02515">
    <property type="entry name" value="CoA_transf_3"/>
    <property type="match status" value="1"/>
</dbReference>
<dbReference type="SUPFAM" id="SSF89796">
    <property type="entry name" value="CoA-transferase family III (CaiB/BaiF)"/>
    <property type="match status" value="1"/>
</dbReference>
<name>BAIF_CLOSV</name>
<keyword id="KW-0088">Bile acid catabolism</keyword>
<keyword id="KW-0903">Direct protein sequencing</keyword>
<keyword id="KW-0378">Hydrolase</keyword>
<keyword id="KW-0442">Lipid degradation</keyword>
<keyword id="KW-0443">Lipid metabolism</keyword>
<keyword id="KW-0753">Steroid metabolism</keyword>
<keyword id="KW-0808">Transferase</keyword>
<comment type="function">
    <text evidence="2 4 8">Functions in the bile acid 7alpha-dehydroxylation pathway, which forms secondary bile acids via the 7alpha-dehydroxylation of primary bile acids, and is carried out by intestinal anaerobic bacteria. Acts as a bile acid CoA transferase with broad bile acid substrate specificity. Catalyzes the transfer of the CoA moiety of secondary bile acid-CoA compounds to primary bile acids. Can use lithocholoyl-CoA, deoxycholoyl-CoA and allodeoxycholoyl-CoA as bile acid CoA donors and cholate, allocholate, chenodeoxycholate, ursodeoxycholate, and beta-muricholate as bile acid CoA acceptors (PubMed:22021638). Also displays CoA hydrolase activity, being able to catalyze the hydrolysis of choloyl-CoA, 3-dehydrocholoyl-CoA, and chenodeoxycholoyl-CoA, releasing CoA and the corresponding free bile acid (PubMed:9869646). However, this latter activity may not represent the actual activity of this enzyme, since using a transferase rather than hydrolase, the bacteria conserve the thioester bond energy, saving ATP molecules (Probable). Shows no hydrolytic activity with acetyl-CoA, isovaleryl-CoA, palmitoyl-CoA, or phenylacetyl-CoA as substrates (PubMed:9869646).</text>
</comment>
<comment type="catalytic activity">
    <reaction evidence="2">
        <text>lithocholoyl-CoA + cholate = choloyl-CoA + lithocholate</text>
        <dbReference type="Rhea" id="RHEA:49432"/>
        <dbReference type="ChEBI" id="CHEBI:29744"/>
        <dbReference type="ChEBI" id="CHEBI:29747"/>
        <dbReference type="ChEBI" id="CHEBI:57373"/>
        <dbReference type="ChEBI" id="CHEBI:87438"/>
        <dbReference type="EC" id="2.8.3.25"/>
    </reaction>
    <physiologicalReaction direction="left-to-right" evidence="8">
        <dbReference type="Rhea" id="RHEA:49433"/>
    </physiologicalReaction>
</comment>
<comment type="catalytic activity">
    <reaction evidence="2">
        <text>deoxycholoyl-CoA + cholate = choloyl-CoA + deoxycholate</text>
        <dbReference type="Rhea" id="RHEA:49436"/>
        <dbReference type="ChEBI" id="CHEBI:23614"/>
        <dbReference type="ChEBI" id="CHEBI:29747"/>
        <dbReference type="ChEBI" id="CHEBI:57373"/>
        <dbReference type="ChEBI" id="CHEBI:58810"/>
        <dbReference type="EC" id="2.8.3.25"/>
    </reaction>
    <physiologicalReaction direction="left-to-right" evidence="8">
        <dbReference type="Rhea" id="RHEA:49437"/>
    </physiologicalReaction>
</comment>
<comment type="catalytic activity">
    <reaction evidence="2">
        <text>allodeoxycholoyl-CoA + cholate = allodeoxycholate + choloyl-CoA</text>
        <dbReference type="Rhea" id="RHEA:53756"/>
        <dbReference type="ChEBI" id="CHEBI:29747"/>
        <dbReference type="ChEBI" id="CHEBI:57373"/>
        <dbReference type="ChEBI" id="CHEBI:137662"/>
        <dbReference type="ChEBI" id="CHEBI:137664"/>
    </reaction>
    <physiologicalReaction direction="left-to-right" evidence="8">
        <dbReference type="Rhea" id="RHEA:53757"/>
    </physiologicalReaction>
</comment>
<comment type="catalytic activity">
    <reaction evidence="2">
        <text>allocholate + deoxycholoyl-CoA = allocholoyl-CoA + deoxycholate</text>
        <dbReference type="Rhea" id="RHEA:53760"/>
        <dbReference type="ChEBI" id="CHEBI:23614"/>
        <dbReference type="ChEBI" id="CHEBI:58810"/>
        <dbReference type="ChEBI" id="CHEBI:137661"/>
        <dbReference type="ChEBI" id="CHEBI:137663"/>
    </reaction>
    <physiologicalReaction direction="left-to-right" evidence="8">
        <dbReference type="Rhea" id="RHEA:53761"/>
    </physiologicalReaction>
</comment>
<comment type="catalytic activity">
    <reaction evidence="2">
        <text>allocholate + lithocholoyl-CoA = allocholoyl-CoA + lithocholate</text>
        <dbReference type="Rhea" id="RHEA:53764"/>
        <dbReference type="ChEBI" id="CHEBI:29744"/>
        <dbReference type="ChEBI" id="CHEBI:87438"/>
        <dbReference type="ChEBI" id="CHEBI:137661"/>
        <dbReference type="ChEBI" id="CHEBI:137663"/>
    </reaction>
    <physiologicalReaction direction="left-to-right" evidence="8">
        <dbReference type="Rhea" id="RHEA:53765"/>
    </physiologicalReaction>
</comment>
<comment type="catalytic activity">
    <reaction evidence="2">
        <text>allocholate + allodeoxycholoyl-CoA = allocholoyl-CoA + allodeoxycholate</text>
        <dbReference type="Rhea" id="RHEA:53768"/>
        <dbReference type="ChEBI" id="CHEBI:137661"/>
        <dbReference type="ChEBI" id="CHEBI:137662"/>
        <dbReference type="ChEBI" id="CHEBI:137663"/>
        <dbReference type="ChEBI" id="CHEBI:137664"/>
    </reaction>
    <physiologicalReaction direction="left-to-right" evidence="8">
        <dbReference type="Rhea" id="RHEA:53769"/>
    </physiologicalReaction>
</comment>
<comment type="catalytic activity">
    <reaction evidence="2">
        <text>lithocholoyl-CoA + chenodeoxycholate = chenodeoxycholoyl-CoA + lithocholate</text>
        <dbReference type="Rhea" id="RHEA:53772"/>
        <dbReference type="ChEBI" id="CHEBI:29744"/>
        <dbReference type="ChEBI" id="CHEBI:36234"/>
        <dbReference type="ChEBI" id="CHEBI:62989"/>
        <dbReference type="ChEBI" id="CHEBI:87438"/>
    </reaction>
    <physiologicalReaction direction="left-to-right" evidence="8">
        <dbReference type="Rhea" id="RHEA:53773"/>
    </physiologicalReaction>
</comment>
<comment type="catalytic activity">
    <reaction evidence="2">
        <text>ursodeoxycholate + deoxycholoyl-CoA = ursodeoxycholoyl-CoA + deoxycholate</text>
        <dbReference type="Rhea" id="RHEA:53796"/>
        <dbReference type="ChEBI" id="CHEBI:23614"/>
        <dbReference type="ChEBI" id="CHEBI:58810"/>
        <dbReference type="ChEBI" id="CHEBI:78604"/>
        <dbReference type="ChEBI" id="CHEBI:137679"/>
    </reaction>
    <physiologicalReaction direction="left-to-right" evidence="8">
        <dbReference type="Rhea" id="RHEA:53797"/>
    </physiologicalReaction>
</comment>
<comment type="catalytic activity">
    <reaction evidence="2">
        <text>ursodeoxycholate + lithocholoyl-CoA = ursodeoxycholoyl-CoA + lithocholate</text>
        <dbReference type="Rhea" id="RHEA:53800"/>
        <dbReference type="ChEBI" id="CHEBI:29744"/>
        <dbReference type="ChEBI" id="CHEBI:78604"/>
        <dbReference type="ChEBI" id="CHEBI:87438"/>
        <dbReference type="ChEBI" id="CHEBI:137679"/>
    </reaction>
    <physiologicalReaction direction="left-to-right" evidence="8">
        <dbReference type="Rhea" id="RHEA:53801"/>
    </physiologicalReaction>
</comment>
<comment type="catalytic activity">
    <reaction evidence="2">
        <text>allodeoxycholoyl-CoA + ursodeoxycholate = ursodeoxycholoyl-CoA + allodeoxycholate</text>
        <dbReference type="Rhea" id="RHEA:53804"/>
        <dbReference type="ChEBI" id="CHEBI:78604"/>
        <dbReference type="ChEBI" id="CHEBI:137662"/>
        <dbReference type="ChEBI" id="CHEBI:137664"/>
        <dbReference type="ChEBI" id="CHEBI:137679"/>
    </reaction>
    <physiologicalReaction direction="left-to-right" evidence="8">
        <dbReference type="Rhea" id="RHEA:53805"/>
    </physiologicalReaction>
</comment>
<comment type="catalytic activity">
    <reaction evidence="2">
        <text>beta-muricholate + lithocholoyl-CoA = beta-muricholoyl-CoA + lithocholate</text>
        <dbReference type="Rhea" id="RHEA:53780"/>
        <dbReference type="ChEBI" id="CHEBI:29744"/>
        <dbReference type="ChEBI" id="CHEBI:87438"/>
        <dbReference type="ChEBI" id="CHEBI:134119"/>
        <dbReference type="ChEBI" id="CHEBI:137668"/>
    </reaction>
    <physiologicalReaction direction="left-to-right" evidence="8">
        <dbReference type="Rhea" id="RHEA:53781"/>
    </physiologicalReaction>
</comment>
<comment type="catalytic activity">
    <reaction evidence="2">
        <text>beta-muricholate + deoxycholoyl-CoA = beta-muricholoyl-CoA + deoxycholate</text>
        <dbReference type="Rhea" id="RHEA:53784"/>
        <dbReference type="ChEBI" id="CHEBI:23614"/>
        <dbReference type="ChEBI" id="CHEBI:58810"/>
        <dbReference type="ChEBI" id="CHEBI:134119"/>
        <dbReference type="ChEBI" id="CHEBI:137668"/>
    </reaction>
    <physiologicalReaction direction="left-to-right" evidence="8">
        <dbReference type="Rhea" id="RHEA:53785"/>
    </physiologicalReaction>
</comment>
<comment type="catalytic activity">
    <reaction evidence="2">
        <text>beta-muricholate + allodeoxycholoyl-CoA = beta-muricholoyl-CoA + allodeoxycholate</text>
        <dbReference type="Rhea" id="RHEA:53788"/>
        <dbReference type="ChEBI" id="CHEBI:134119"/>
        <dbReference type="ChEBI" id="CHEBI:137662"/>
        <dbReference type="ChEBI" id="CHEBI:137664"/>
        <dbReference type="ChEBI" id="CHEBI:137668"/>
    </reaction>
    <physiologicalReaction direction="left-to-right" evidence="8">
        <dbReference type="Rhea" id="RHEA:53789"/>
    </physiologicalReaction>
</comment>
<comment type="catalytic activity">
    <reaction evidence="4">
        <text>choloyl-CoA + H2O = cholate + CoA + H(+)</text>
        <dbReference type="Rhea" id="RHEA:14541"/>
        <dbReference type="ChEBI" id="CHEBI:15377"/>
        <dbReference type="ChEBI" id="CHEBI:15378"/>
        <dbReference type="ChEBI" id="CHEBI:29747"/>
        <dbReference type="ChEBI" id="CHEBI:57287"/>
        <dbReference type="ChEBI" id="CHEBI:57373"/>
    </reaction>
    <physiologicalReaction direction="left-to-right" evidence="10">
        <dbReference type="Rhea" id="RHEA:14542"/>
    </physiologicalReaction>
</comment>
<comment type="catalytic activity">
    <reaction evidence="4">
        <text>chenodeoxycholoyl-CoA + H2O = chenodeoxycholate + CoA + H(+)</text>
        <dbReference type="Rhea" id="RHEA:31511"/>
        <dbReference type="ChEBI" id="CHEBI:15377"/>
        <dbReference type="ChEBI" id="CHEBI:15378"/>
        <dbReference type="ChEBI" id="CHEBI:36234"/>
        <dbReference type="ChEBI" id="CHEBI:57287"/>
        <dbReference type="ChEBI" id="CHEBI:62989"/>
    </reaction>
    <physiologicalReaction direction="left-to-right" evidence="10">
        <dbReference type="Rhea" id="RHEA:31512"/>
    </physiologicalReaction>
</comment>
<comment type="biophysicochemical properties">
    <kinetics>
        <KM evidence="4">175 uM for choloyl-CoA (in the assay for hydrolysis of choloyl-CoA)</KM>
        <Vmax evidence="4">374.0 umol/min/mg enzyme for the hydrolysis of choloyl-CoA</Vmax>
    </kinetics>
    <phDependence>
        <text evidence="4">Optimum pH is between pH 6.0 and 7.0 or the hydrolysis of choloyl-CoA. No activity is detected below pH 4.0 or above pH 9.0.</text>
    </phDependence>
</comment>
<comment type="pathway">
    <text evidence="8">Lipid metabolism; bile acid biosynthesis.</text>
</comment>
<comment type="induction">
    <text evidence="9">Induced by bile acids.</text>
</comment>
<comment type="similarity">
    <text evidence="7">Belongs to the CoA-transferase III family.</text>
</comment>
<evidence type="ECO:0000250" key="1">
    <source>
        <dbReference type="UniProtKB" id="P31572"/>
    </source>
</evidence>
<evidence type="ECO:0000269" key="2">
    <source>
    </source>
</evidence>
<evidence type="ECO:0000269" key="3">
    <source>
    </source>
</evidence>
<evidence type="ECO:0000269" key="4">
    <source>
    </source>
</evidence>
<evidence type="ECO:0000303" key="5">
    <source>
    </source>
</evidence>
<evidence type="ECO:0000303" key="6">
    <source>
    </source>
</evidence>
<evidence type="ECO:0000305" key="7"/>
<evidence type="ECO:0000305" key="8">
    <source>
    </source>
</evidence>
<evidence type="ECO:0000305" key="9">
    <source>
    </source>
</evidence>
<evidence type="ECO:0000305" key="10">
    <source>
    </source>
</evidence>
<sequence length="426" mass="47469">MAGIKDFPKFGALAGLKILDSGSNIAGPLGGGLLAECGATVIHFEGPKKPDNQRGWYGYPQNHRNQLSMVADIKSEEGRKIFLDLIKWADIWVESSKGGQYDRLGLSDEVIWEVNPKIAIVHVSGYGQTGDPSYVTRASYDAVGQAFSGYMSLNGTTEALKINPYLSDFVCGLTTCWAMLACYVSTILTGKGESVDVAQYEALARIMDGRMIQYATDGVKMPRTGNKDAQAALFSFYTCKDGRTIFIGMTGAEVCKRGFPIIGLPVPGTGDPDFPEGFTGWMIYTPVGQRMEKAMEKYVSEHTMEEVEAEMQAHQIPCQRVYELEDCLNDPHWKARGTITEWDDPMMGHITGLGLINKFKRNPSEIWRGAPLFGMDNRDILKDLGYDDAKIDELYEQGIVNEFDLDTTIKRYRLDEVIPHMRKKEE</sequence>
<organism>
    <name type="scientific">Clostridium scindens (strain JCM 10418 / VPI 12708)</name>
    <dbReference type="NCBI Taxonomy" id="29347"/>
    <lineage>
        <taxon>Bacteria</taxon>
        <taxon>Bacillati</taxon>
        <taxon>Bacillota</taxon>
        <taxon>Clostridia</taxon>
        <taxon>Lachnospirales</taxon>
        <taxon>Lachnospiraceae</taxon>
    </lineage>
</organism>
<gene>
    <name evidence="6" type="primary">baiF</name>
</gene>
<proteinExistence type="evidence at protein level"/>